<sequence>MILTTTHEIEGRRIERYLGIVFGEAIVGANVLRDLLAQIRDIVGGRSGAYEAELRRARETALAEMAEAARRLGADAVVGVDLDYEVLGSGNSMLMVTASGTAVKLAP</sequence>
<organism>
    <name type="scientific">Thermus thermophilus (strain ATCC 27634 / DSM 579 / HB8)</name>
    <dbReference type="NCBI Taxonomy" id="300852"/>
    <lineage>
        <taxon>Bacteria</taxon>
        <taxon>Thermotogati</taxon>
        <taxon>Deinococcota</taxon>
        <taxon>Deinococci</taxon>
        <taxon>Thermales</taxon>
        <taxon>Thermaceae</taxon>
        <taxon>Thermus</taxon>
    </lineage>
</organism>
<keyword id="KW-1185">Reference proteome</keyword>
<feature type="chain" id="PRO_0000225853" description="UPF0145 protein TTHA1256">
    <location>
        <begin position="1"/>
        <end position="107"/>
    </location>
</feature>
<dbReference type="EMBL" id="AP008226">
    <property type="protein sequence ID" value="BAD71079.1"/>
    <property type="molecule type" value="Genomic_DNA"/>
</dbReference>
<dbReference type="RefSeq" id="WP_011173319.1">
    <property type="nucleotide sequence ID" value="NC_006461.1"/>
</dbReference>
<dbReference type="RefSeq" id="YP_144522.1">
    <property type="nucleotide sequence ID" value="NC_006461.1"/>
</dbReference>
<dbReference type="SMR" id="Q5SIV8"/>
<dbReference type="EnsemblBacteria" id="BAD71079">
    <property type="protein sequence ID" value="BAD71079"/>
    <property type="gene ID" value="BAD71079"/>
</dbReference>
<dbReference type="GeneID" id="3169338"/>
<dbReference type="KEGG" id="ttj:TTHA1256"/>
<dbReference type="PATRIC" id="fig|300852.9.peg.1235"/>
<dbReference type="eggNOG" id="COG0393">
    <property type="taxonomic scope" value="Bacteria"/>
</dbReference>
<dbReference type="HOGENOM" id="CLU_117144_3_2_0"/>
<dbReference type="PhylomeDB" id="Q5SIV8"/>
<dbReference type="Proteomes" id="UP000000532">
    <property type="component" value="Chromosome"/>
</dbReference>
<dbReference type="Gene3D" id="3.30.110.70">
    <property type="entry name" value="Hypothetical protein apc22750. Chain B"/>
    <property type="match status" value="1"/>
</dbReference>
<dbReference type="HAMAP" id="MF_00338">
    <property type="entry name" value="UPF0145"/>
    <property type="match status" value="1"/>
</dbReference>
<dbReference type="InterPro" id="IPR035439">
    <property type="entry name" value="UPF0145_dom_sf"/>
</dbReference>
<dbReference type="InterPro" id="IPR002765">
    <property type="entry name" value="UPF0145_YbjQ-like"/>
</dbReference>
<dbReference type="NCBIfam" id="NF002776">
    <property type="entry name" value="PRK02877.1"/>
    <property type="match status" value="1"/>
</dbReference>
<dbReference type="PANTHER" id="PTHR34068">
    <property type="entry name" value="UPF0145 PROTEIN YBJQ"/>
    <property type="match status" value="1"/>
</dbReference>
<dbReference type="PANTHER" id="PTHR34068:SF1">
    <property type="entry name" value="UPF0145 PROTEIN YBJQ"/>
    <property type="match status" value="1"/>
</dbReference>
<dbReference type="Pfam" id="PF01906">
    <property type="entry name" value="YbjQ_1"/>
    <property type="match status" value="1"/>
</dbReference>
<dbReference type="SUPFAM" id="SSF117782">
    <property type="entry name" value="YbjQ-like"/>
    <property type="match status" value="1"/>
</dbReference>
<reference key="1">
    <citation type="submission" date="2004-11" db="EMBL/GenBank/DDBJ databases">
        <title>Complete genome sequence of Thermus thermophilus HB8.</title>
        <authorList>
            <person name="Masui R."/>
            <person name="Kurokawa K."/>
            <person name="Nakagawa N."/>
            <person name="Tokunaga F."/>
            <person name="Koyama Y."/>
            <person name="Shibata T."/>
            <person name="Oshima T."/>
            <person name="Yokoyama S."/>
            <person name="Yasunaga T."/>
            <person name="Kuramitsu S."/>
        </authorList>
    </citation>
    <scope>NUCLEOTIDE SEQUENCE [LARGE SCALE GENOMIC DNA]</scope>
    <source>
        <strain>ATCC 27634 / DSM 579 / HB8</strain>
    </source>
</reference>
<protein>
    <recommendedName>
        <fullName evidence="1">UPF0145 protein TTHA1256</fullName>
    </recommendedName>
</protein>
<name>Y1256_THET8</name>
<comment type="similarity">
    <text evidence="1">Belongs to the UPF0145 family.</text>
</comment>
<accession>Q5SIV8</accession>
<proteinExistence type="inferred from homology"/>
<gene>
    <name type="ordered locus">TTHA1256</name>
</gene>
<evidence type="ECO:0000255" key="1">
    <source>
        <dbReference type="HAMAP-Rule" id="MF_00338"/>
    </source>
</evidence>